<organism>
    <name type="scientific">Erwinia amylovora</name>
    <name type="common">Fire blight bacteria</name>
    <dbReference type="NCBI Taxonomy" id="552"/>
    <lineage>
        <taxon>Bacteria</taxon>
        <taxon>Pseudomonadati</taxon>
        <taxon>Pseudomonadota</taxon>
        <taxon>Gammaproteobacteria</taxon>
        <taxon>Enterobacterales</taxon>
        <taxon>Erwiniaceae</taxon>
        <taxon>Erwinia</taxon>
    </lineage>
</organism>
<evidence type="ECO:0000250" key="1"/>
<evidence type="ECO:0000255" key="2"/>
<evidence type="ECO:0000305" key="3"/>
<protein>
    <recommendedName>
        <fullName>UDP-galactose-lipid carrier transferase</fullName>
        <ecNumber>2.-.-.-</ecNumber>
    </recommendedName>
</protein>
<reference key="1">
    <citation type="journal article" date="1995" name="Mol. Microbiol.">
        <title>Molecular analysis of the ams operon required for exopolysaccharide synthesis of Erwinia amylovora.</title>
        <authorList>
            <person name="Bugert P."/>
            <person name="Geider K."/>
        </authorList>
    </citation>
    <scope>NUCLEOTIDE SEQUENCE [GENOMIC DNA]</scope>
    <source>
        <strain>EA1/79</strain>
    </source>
</reference>
<reference key="2">
    <citation type="submission" date="2011-08" db="EMBL/GenBank/DDBJ databases">
        <authorList>
            <person name="Geider K.K."/>
        </authorList>
    </citation>
    <scope>SEQUENCE REVISION TO 306 AND 333</scope>
</reference>
<feature type="chain" id="PRO_0000166462" description="UDP-galactose-lipid carrier transferase">
    <location>
        <begin position="1"/>
        <end position="477"/>
    </location>
</feature>
<feature type="transmembrane region" description="Helical" evidence="2">
    <location>
        <begin position="16"/>
        <end position="36"/>
    </location>
</feature>
<feature type="transmembrane region" description="Helical" evidence="2">
    <location>
        <begin position="52"/>
        <end position="72"/>
    </location>
</feature>
<feature type="transmembrane region" description="Helical" evidence="2">
    <location>
        <begin position="93"/>
        <end position="113"/>
    </location>
</feature>
<feature type="transmembrane region" description="Helical" evidence="2">
    <location>
        <begin position="115"/>
        <end position="135"/>
    </location>
</feature>
<feature type="transmembrane region" description="Helical" evidence="2">
    <location>
        <begin position="175"/>
        <end position="195"/>
    </location>
</feature>
<feature type="transmembrane region" description="Helical" evidence="2">
    <location>
        <begin position="284"/>
        <end position="304"/>
    </location>
</feature>
<feature type="topological domain" description="Cytoplasmic" evidence="1">
    <location>
        <begin position="305"/>
        <end position="477"/>
    </location>
</feature>
<dbReference type="EC" id="2.-.-.-"/>
<dbReference type="EMBL" id="X77921">
    <property type="protein sequence ID" value="CAA54879.2"/>
    <property type="molecule type" value="Genomic_DNA"/>
</dbReference>
<dbReference type="PIR" id="S61891">
    <property type="entry name" value="S61891"/>
</dbReference>
<dbReference type="SMR" id="Q46628"/>
<dbReference type="OMA" id="LAKHNCR"/>
<dbReference type="UniPathway" id="UPA00631"/>
<dbReference type="GO" id="GO:0005886">
    <property type="term" value="C:plasma membrane"/>
    <property type="evidence" value="ECO:0007669"/>
    <property type="project" value="UniProtKB-SubCell"/>
</dbReference>
<dbReference type="GO" id="GO:0016780">
    <property type="term" value="F:phosphotransferase activity, for other substituted phosphate groups"/>
    <property type="evidence" value="ECO:0007669"/>
    <property type="project" value="TreeGrafter"/>
</dbReference>
<dbReference type="GO" id="GO:0000271">
    <property type="term" value="P:polysaccharide biosynthetic process"/>
    <property type="evidence" value="ECO:0007669"/>
    <property type="project" value="UniProtKB-KW"/>
</dbReference>
<dbReference type="Gene3D" id="3.40.50.720">
    <property type="entry name" value="NAD(P)-binding Rossmann-like Domain"/>
    <property type="match status" value="1"/>
</dbReference>
<dbReference type="InterPro" id="IPR003362">
    <property type="entry name" value="Bact_transf"/>
</dbReference>
<dbReference type="InterPro" id="IPR017475">
    <property type="entry name" value="EPS_sugar_tfrase"/>
</dbReference>
<dbReference type="InterPro" id="IPR017472">
    <property type="entry name" value="Undecaprenyl-P_galact_Ptfrase"/>
</dbReference>
<dbReference type="NCBIfam" id="TIGR03025">
    <property type="entry name" value="EPS_sugtrans"/>
    <property type="match status" value="1"/>
</dbReference>
<dbReference type="NCBIfam" id="TIGR03022">
    <property type="entry name" value="WbaP_sugtrans"/>
    <property type="match status" value="1"/>
</dbReference>
<dbReference type="PANTHER" id="PTHR30576">
    <property type="entry name" value="COLANIC BIOSYNTHESIS UDP-GLUCOSE LIPID CARRIER TRANSFERASE"/>
    <property type="match status" value="1"/>
</dbReference>
<dbReference type="PANTHER" id="PTHR30576:SF4">
    <property type="entry name" value="UNDECAPRENYL-PHOSPHATE GALACTOSE PHOSPHOTRANSFERASE"/>
    <property type="match status" value="1"/>
</dbReference>
<dbReference type="Pfam" id="PF02397">
    <property type="entry name" value="Bac_transf"/>
    <property type="match status" value="1"/>
</dbReference>
<dbReference type="Pfam" id="PF13727">
    <property type="entry name" value="CoA_binding_3"/>
    <property type="match status" value="1"/>
</dbReference>
<gene>
    <name type="primary">amsG</name>
</gene>
<name>AMSG_ERWAM</name>
<proteinExistence type="inferred from homology"/>
<sequence length="477" mass="55074">MREIEFTFKGLLIRLSLALSDLIFFNIALALAIVLINGFPGEILTGIPQHELDLKIATHILLSVICVGWFWVRLRHYTYRKPFWFELKEVFRTILIFSIVDLSVSALSKWELSRWIWILTWLLSMAMVPFGRACVKRLLNRKKLWKKQSIIIGSGKNAQEAWQALQSEEMMGFDVIAFYDVDGSQTALELFGVPVLKEEQQLWSLVDSDTQFIVAVEYEQSQSRDRWLKNLATHNCRSVSVIPSLRGVPLYGTDMAYIFSHEVMILRVSNNLAKHSSRFLKRTFDLVGALSIITLLLPALVILIFMVSRDGGAPIYGHERVGRDGRKFKCLKFRSMVVNSKEVLEEVLRTDPVARAEWDEDFKLKNDPRITRIGHFIRKTSLDELPQLWNVVRGEMSLVGPRPVIEAELERYAGDVDYYFMAKPGMTGLWQVSGRNDVSYETRVYFDSWYVKNWSLWNDIAILFKTIGVVLKRDGAY</sequence>
<keyword id="KW-1003">Cell membrane</keyword>
<keyword id="KW-0270">Exopolysaccharide synthesis</keyword>
<keyword id="KW-0472">Membrane</keyword>
<keyword id="KW-0808">Transferase</keyword>
<keyword id="KW-0812">Transmembrane</keyword>
<keyword id="KW-1133">Transmembrane helix</keyword>
<keyword id="KW-0843">Virulence</keyword>
<accession>Q46628</accession>
<comment type="function">
    <text>Involved in the biosynthesis of amylovoran which functions as a virulence factor. May act as a sugar transferase and may be involved in the export of the repeating unit by flipping the lipid carrier to the periplasmic face of the inner membrane.</text>
</comment>
<comment type="pathway">
    <text>Glycan metabolism; exopolysaccharide biosynthesis.</text>
</comment>
<comment type="subcellular location">
    <subcellularLocation>
        <location>Cell membrane</location>
        <topology>Multi-pass membrane protein</topology>
    </subcellularLocation>
</comment>
<comment type="similarity">
    <text evidence="3">Belongs to the bacterial sugar transferase family.</text>
</comment>